<reference key="1">
    <citation type="journal article" date="2009" name="Proc. Natl. Acad. Sci. U.S.A.">
        <title>Hamiltonella defensa, genome evolution of protective bacterial endosymbiont from pathogenic ancestors.</title>
        <authorList>
            <person name="Degnan P.H."/>
            <person name="Yu Y."/>
            <person name="Sisneros N."/>
            <person name="Wing R.A."/>
            <person name="Moran N.A."/>
        </authorList>
    </citation>
    <scope>NUCLEOTIDE SEQUENCE [LARGE SCALE GENOMIC DNA]</scope>
    <source>
        <strain>5AT</strain>
    </source>
</reference>
<evidence type="ECO:0000255" key="1">
    <source>
        <dbReference type="HAMAP-Rule" id="MF_00379"/>
    </source>
</evidence>
<sequence length="458" mass="50575">MSHTDTIVAQATPIGRGGIGILRISGCATKTVAKEILGKLPRARYAEYLAFKDPEGNILDQGIALYFPAPHSFTGEDVLELQGHGGPIILDLLLKAILNLPDVCVRIARPGEFSERAFLNDKLDLVQAEAVADLIDASTEQAARCALHSLKGTFSLRINQLIESLTYLRVYIEASMDFSDEEIDFLSDGKIETQLDRVIHDLDKVRSEARQGQLLREGMKIVIAGRPNVGKSSLLNALTGRETAIVTQIPGTTRDVLREQIQINGMPLHIIDTAGLRETEDPVEKIGIERAWNEIEQADRILFIVDGSTSSEKTIYPLWPEWEARLSRSRLPITLIRNKSDITGEDVALTETEEGTFISLSARTGEGIDLLREHLQQTMGFSGNMEGGFLARRRHLEALENAAQYLLSARQKWSSGNFLSELLAEELRLAQQVLSEITGQVSSNDLLGIIFSSFCIGK</sequence>
<dbReference type="EC" id="3.6.-.-" evidence="1"/>
<dbReference type="EMBL" id="CP001277">
    <property type="protein sequence ID" value="ACQ68587.1"/>
    <property type="molecule type" value="Genomic_DNA"/>
</dbReference>
<dbReference type="RefSeq" id="WP_015874342.1">
    <property type="nucleotide sequence ID" value="NC_012751.1"/>
</dbReference>
<dbReference type="SMR" id="C4K7P4"/>
<dbReference type="STRING" id="572265.HDEF_2008"/>
<dbReference type="GeneID" id="66261564"/>
<dbReference type="KEGG" id="hde:HDEF_2008"/>
<dbReference type="eggNOG" id="COG0486">
    <property type="taxonomic scope" value="Bacteria"/>
</dbReference>
<dbReference type="HOGENOM" id="CLU_019624_4_1_6"/>
<dbReference type="Proteomes" id="UP000002334">
    <property type="component" value="Chromosome"/>
</dbReference>
<dbReference type="GO" id="GO:0005829">
    <property type="term" value="C:cytosol"/>
    <property type="evidence" value="ECO:0007669"/>
    <property type="project" value="TreeGrafter"/>
</dbReference>
<dbReference type="GO" id="GO:0005525">
    <property type="term" value="F:GTP binding"/>
    <property type="evidence" value="ECO:0007669"/>
    <property type="project" value="UniProtKB-UniRule"/>
</dbReference>
<dbReference type="GO" id="GO:0003924">
    <property type="term" value="F:GTPase activity"/>
    <property type="evidence" value="ECO:0007669"/>
    <property type="project" value="UniProtKB-UniRule"/>
</dbReference>
<dbReference type="GO" id="GO:0046872">
    <property type="term" value="F:metal ion binding"/>
    <property type="evidence" value="ECO:0007669"/>
    <property type="project" value="UniProtKB-KW"/>
</dbReference>
<dbReference type="GO" id="GO:0030488">
    <property type="term" value="P:tRNA methylation"/>
    <property type="evidence" value="ECO:0007669"/>
    <property type="project" value="TreeGrafter"/>
</dbReference>
<dbReference type="GO" id="GO:0002098">
    <property type="term" value="P:tRNA wobble uridine modification"/>
    <property type="evidence" value="ECO:0007669"/>
    <property type="project" value="TreeGrafter"/>
</dbReference>
<dbReference type="CDD" id="cd04164">
    <property type="entry name" value="trmE"/>
    <property type="match status" value="1"/>
</dbReference>
<dbReference type="CDD" id="cd14858">
    <property type="entry name" value="TrmE_N"/>
    <property type="match status" value="1"/>
</dbReference>
<dbReference type="FunFam" id="3.30.1360.120:FF:000001">
    <property type="entry name" value="tRNA modification GTPase MnmE"/>
    <property type="match status" value="1"/>
</dbReference>
<dbReference type="FunFam" id="3.40.50.300:FF:000249">
    <property type="entry name" value="tRNA modification GTPase MnmE"/>
    <property type="match status" value="1"/>
</dbReference>
<dbReference type="Gene3D" id="3.40.50.300">
    <property type="entry name" value="P-loop containing nucleotide triphosphate hydrolases"/>
    <property type="match status" value="1"/>
</dbReference>
<dbReference type="Gene3D" id="3.30.1360.120">
    <property type="entry name" value="Probable tRNA modification gtpase trme, domain 1"/>
    <property type="match status" value="1"/>
</dbReference>
<dbReference type="Gene3D" id="1.20.120.430">
    <property type="entry name" value="tRNA modification GTPase MnmE domain 2"/>
    <property type="match status" value="1"/>
</dbReference>
<dbReference type="HAMAP" id="MF_00379">
    <property type="entry name" value="GTPase_MnmE"/>
    <property type="match status" value="1"/>
</dbReference>
<dbReference type="InterPro" id="IPR031168">
    <property type="entry name" value="G_TrmE"/>
</dbReference>
<dbReference type="InterPro" id="IPR006073">
    <property type="entry name" value="GTP-bd"/>
</dbReference>
<dbReference type="InterPro" id="IPR018948">
    <property type="entry name" value="GTP-bd_TrmE_N"/>
</dbReference>
<dbReference type="InterPro" id="IPR004520">
    <property type="entry name" value="GTPase_MnmE"/>
</dbReference>
<dbReference type="InterPro" id="IPR027368">
    <property type="entry name" value="MnmE_dom2"/>
</dbReference>
<dbReference type="InterPro" id="IPR025867">
    <property type="entry name" value="MnmE_helical"/>
</dbReference>
<dbReference type="InterPro" id="IPR027417">
    <property type="entry name" value="P-loop_NTPase"/>
</dbReference>
<dbReference type="InterPro" id="IPR005225">
    <property type="entry name" value="Small_GTP-bd"/>
</dbReference>
<dbReference type="InterPro" id="IPR027266">
    <property type="entry name" value="TrmE/GcvT_dom1"/>
</dbReference>
<dbReference type="NCBIfam" id="TIGR00450">
    <property type="entry name" value="mnmE_trmE_thdF"/>
    <property type="match status" value="1"/>
</dbReference>
<dbReference type="NCBIfam" id="NF003661">
    <property type="entry name" value="PRK05291.1-3"/>
    <property type="match status" value="1"/>
</dbReference>
<dbReference type="NCBIfam" id="TIGR00231">
    <property type="entry name" value="small_GTP"/>
    <property type="match status" value="1"/>
</dbReference>
<dbReference type="PANTHER" id="PTHR42714">
    <property type="entry name" value="TRNA MODIFICATION GTPASE GTPBP3"/>
    <property type="match status" value="1"/>
</dbReference>
<dbReference type="PANTHER" id="PTHR42714:SF2">
    <property type="entry name" value="TRNA MODIFICATION GTPASE GTPBP3, MITOCHONDRIAL"/>
    <property type="match status" value="1"/>
</dbReference>
<dbReference type="Pfam" id="PF01926">
    <property type="entry name" value="MMR_HSR1"/>
    <property type="match status" value="1"/>
</dbReference>
<dbReference type="Pfam" id="PF12631">
    <property type="entry name" value="MnmE_helical"/>
    <property type="match status" value="1"/>
</dbReference>
<dbReference type="Pfam" id="PF10396">
    <property type="entry name" value="TrmE_N"/>
    <property type="match status" value="1"/>
</dbReference>
<dbReference type="PRINTS" id="PR00449">
    <property type="entry name" value="RASTRNSFRMNG"/>
</dbReference>
<dbReference type="SUPFAM" id="SSF52540">
    <property type="entry name" value="P-loop containing nucleoside triphosphate hydrolases"/>
    <property type="match status" value="1"/>
</dbReference>
<dbReference type="PROSITE" id="PS51709">
    <property type="entry name" value="G_TRME"/>
    <property type="match status" value="1"/>
</dbReference>
<keyword id="KW-0963">Cytoplasm</keyword>
<keyword id="KW-0342">GTP-binding</keyword>
<keyword id="KW-0378">Hydrolase</keyword>
<keyword id="KW-0460">Magnesium</keyword>
<keyword id="KW-0479">Metal-binding</keyword>
<keyword id="KW-0547">Nucleotide-binding</keyword>
<keyword id="KW-0630">Potassium</keyword>
<keyword id="KW-0819">tRNA processing</keyword>
<name>MNME_HAMD5</name>
<feature type="chain" id="PRO_1000205687" description="tRNA modification GTPase MnmE">
    <location>
        <begin position="1"/>
        <end position="458"/>
    </location>
</feature>
<feature type="domain" description="TrmE-type G">
    <location>
        <begin position="218"/>
        <end position="380"/>
    </location>
</feature>
<feature type="binding site" evidence="1">
    <location>
        <position position="23"/>
    </location>
    <ligand>
        <name>(6S)-5-formyl-5,6,7,8-tetrahydrofolate</name>
        <dbReference type="ChEBI" id="CHEBI:57457"/>
    </ligand>
</feature>
<feature type="binding site" evidence="1">
    <location>
        <position position="80"/>
    </location>
    <ligand>
        <name>(6S)-5-formyl-5,6,7,8-tetrahydrofolate</name>
        <dbReference type="ChEBI" id="CHEBI:57457"/>
    </ligand>
</feature>
<feature type="binding site" evidence="1">
    <location>
        <position position="122"/>
    </location>
    <ligand>
        <name>(6S)-5-formyl-5,6,7,8-tetrahydrofolate</name>
        <dbReference type="ChEBI" id="CHEBI:57457"/>
    </ligand>
</feature>
<feature type="binding site" evidence="1">
    <location>
        <begin position="228"/>
        <end position="233"/>
    </location>
    <ligand>
        <name>GTP</name>
        <dbReference type="ChEBI" id="CHEBI:37565"/>
    </ligand>
</feature>
<feature type="binding site" evidence="1">
    <location>
        <position position="228"/>
    </location>
    <ligand>
        <name>K(+)</name>
        <dbReference type="ChEBI" id="CHEBI:29103"/>
    </ligand>
</feature>
<feature type="binding site" evidence="1">
    <location>
        <position position="232"/>
    </location>
    <ligand>
        <name>Mg(2+)</name>
        <dbReference type="ChEBI" id="CHEBI:18420"/>
    </ligand>
</feature>
<feature type="binding site" evidence="1">
    <location>
        <begin position="247"/>
        <end position="253"/>
    </location>
    <ligand>
        <name>GTP</name>
        <dbReference type="ChEBI" id="CHEBI:37565"/>
    </ligand>
</feature>
<feature type="binding site" evidence="1">
    <location>
        <position position="247"/>
    </location>
    <ligand>
        <name>K(+)</name>
        <dbReference type="ChEBI" id="CHEBI:29103"/>
    </ligand>
</feature>
<feature type="binding site" evidence="1">
    <location>
        <position position="249"/>
    </location>
    <ligand>
        <name>K(+)</name>
        <dbReference type="ChEBI" id="CHEBI:29103"/>
    </ligand>
</feature>
<feature type="binding site" evidence="1">
    <location>
        <position position="252"/>
    </location>
    <ligand>
        <name>K(+)</name>
        <dbReference type="ChEBI" id="CHEBI:29103"/>
    </ligand>
</feature>
<feature type="binding site" evidence="1">
    <location>
        <position position="253"/>
    </location>
    <ligand>
        <name>Mg(2+)</name>
        <dbReference type="ChEBI" id="CHEBI:18420"/>
    </ligand>
</feature>
<feature type="binding site" evidence="1">
    <location>
        <begin position="272"/>
        <end position="275"/>
    </location>
    <ligand>
        <name>GTP</name>
        <dbReference type="ChEBI" id="CHEBI:37565"/>
    </ligand>
</feature>
<feature type="binding site" evidence="1">
    <location>
        <begin position="361"/>
        <end position="363"/>
    </location>
    <ligand>
        <name>GTP</name>
        <dbReference type="ChEBI" id="CHEBI:37565"/>
    </ligand>
</feature>
<feature type="binding site" evidence="1">
    <location>
        <position position="458"/>
    </location>
    <ligand>
        <name>(6S)-5-formyl-5,6,7,8-tetrahydrofolate</name>
        <dbReference type="ChEBI" id="CHEBI:57457"/>
    </ligand>
</feature>
<organism>
    <name type="scientific">Hamiltonella defensa subsp. Acyrthosiphon pisum (strain 5AT)</name>
    <dbReference type="NCBI Taxonomy" id="572265"/>
    <lineage>
        <taxon>Bacteria</taxon>
        <taxon>Pseudomonadati</taxon>
        <taxon>Pseudomonadota</taxon>
        <taxon>Gammaproteobacteria</taxon>
        <taxon>Enterobacterales</taxon>
        <taxon>Enterobacteriaceae</taxon>
        <taxon>aphid secondary symbionts</taxon>
        <taxon>Candidatus Hamiltonella</taxon>
    </lineage>
</organism>
<gene>
    <name evidence="1" type="primary">mnmE</name>
    <name evidence="1" type="synonym">trmE</name>
    <name type="ordered locus">HDEF_2008</name>
</gene>
<proteinExistence type="inferred from homology"/>
<comment type="function">
    <text evidence="1">Exhibits a very high intrinsic GTPase hydrolysis rate. Involved in the addition of a carboxymethylaminomethyl (cmnm) group at the wobble position (U34) of certain tRNAs, forming tRNA-cmnm(5)s(2)U34.</text>
</comment>
<comment type="cofactor">
    <cofactor evidence="1">
        <name>K(+)</name>
        <dbReference type="ChEBI" id="CHEBI:29103"/>
    </cofactor>
    <text evidence="1">Binds 1 potassium ion per subunit.</text>
</comment>
<comment type="subunit">
    <text evidence="1">Homodimer. Heterotetramer of two MnmE and two MnmG subunits.</text>
</comment>
<comment type="subcellular location">
    <subcellularLocation>
        <location evidence="1">Cytoplasm</location>
    </subcellularLocation>
</comment>
<comment type="similarity">
    <text evidence="1">Belongs to the TRAFAC class TrmE-Era-EngA-EngB-Septin-like GTPase superfamily. TrmE GTPase family.</text>
</comment>
<protein>
    <recommendedName>
        <fullName evidence="1">tRNA modification GTPase MnmE</fullName>
        <ecNumber evidence="1">3.6.-.-</ecNumber>
    </recommendedName>
</protein>
<accession>C4K7P4</accession>